<reference key="1">
    <citation type="journal article" date="2005" name="J. Bacteriol.">
        <title>Insights on evolution of virulence and resistance from the complete genome analysis of an early methicillin-resistant Staphylococcus aureus strain and a biofilm-producing methicillin-resistant Staphylococcus epidermidis strain.</title>
        <authorList>
            <person name="Gill S.R."/>
            <person name="Fouts D.E."/>
            <person name="Archer G.L."/>
            <person name="Mongodin E.F."/>
            <person name="DeBoy R.T."/>
            <person name="Ravel J."/>
            <person name="Paulsen I.T."/>
            <person name="Kolonay J.F."/>
            <person name="Brinkac L.M."/>
            <person name="Beanan M.J."/>
            <person name="Dodson R.J."/>
            <person name="Daugherty S.C."/>
            <person name="Madupu R."/>
            <person name="Angiuoli S.V."/>
            <person name="Durkin A.S."/>
            <person name="Haft D.H."/>
            <person name="Vamathevan J.J."/>
            <person name="Khouri H."/>
            <person name="Utterback T.R."/>
            <person name="Lee C."/>
            <person name="Dimitrov G."/>
            <person name="Jiang L."/>
            <person name="Qin H."/>
            <person name="Weidman J."/>
            <person name="Tran K."/>
            <person name="Kang K.H."/>
            <person name="Hance I.R."/>
            <person name="Nelson K.E."/>
            <person name="Fraser C.M."/>
        </authorList>
    </citation>
    <scope>NUCLEOTIDE SEQUENCE [LARGE SCALE GENOMIC DNA]</scope>
    <source>
        <strain>ATCC 35984 / DSM 28319 / BCRC 17069 / CCUG 31568 / BM 3577 / RP62A</strain>
    </source>
</reference>
<comment type="function">
    <text evidence="1">Catalyzes specifically the NADPH-dependent reduction of coenzyme A disulfide.</text>
</comment>
<comment type="catalytic activity">
    <reaction evidence="1">
        <text>NADP(+) + 2 CoA = CoA-disulfide + NADPH + H(+)</text>
        <dbReference type="Rhea" id="RHEA:14705"/>
        <dbReference type="ChEBI" id="CHEBI:15378"/>
        <dbReference type="ChEBI" id="CHEBI:57287"/>
        <dbReference type="ChEBI" id="CHEBI:57783"/>
        <dbReference type="ChEBI" id="CHEBI:58349"/>
        <dbReference type="ChEBI" id="CHEBI:62209"/>
        <dbReference type="EC" id="1.8.1.14"/>
    </reaction>
</comment>
<comment type="cofactor">
    <cofactor evidence="1">
        <name>FAD</name>
        <dbReference type="ChEBI" id="CHEBI:57692"/>
    </cofactor>
    <text evidence="1">Binds 1 FAD per subunit.</text>
</comment>
<comment type="subunit">
    <text evidence="1">Homodimer.</text>
</comment>
<comment type="domain">
    <text evidence="1">Contains 2 FAD binding domains and a single NADPH binding domain.</text>
</comment>
<comment type="miscellaneous">
    <text evidence="1">Reduction of disulfides occurs by a thiol-disulfide exchange reaction, but involves only a single catalytic cysteine residue that forms a stable mixed disulfide with CoA during catalysis.</text>
</comment>
<comment type="similarity">
    <text evidence="1">Belongs to the class-III pyridine nucleotide-disulfide oxidoreductase family.</text>
</comment>
<dbReference type="EC" id="1.8.1.14" evidence="1"/>
<dbReference type="EMBL" id="CP000029">
    <property type="protein sequence ID" value="AAW53947.1"/>
    <property type="molecule type" value="Genomic_DNA"/>
</dbReference>
<dbReference type="RefSeq" id="WP_001829263.1">
    <property type="nucleotide sequence ID" value="NC_002976.3"/>
</dbReference>
<dbReference type="SMR" id="Q5HQI9"/>
<dbReference type="STRING" id="176279.SERP0560"/>
<dbReference type="KEGG" id="ser:SERP0560"/>
<dbReference type="eggNOG" id="COG0446">
    <property type="taxonomic scope" value="Bacteria"/>
</dbReference>
<dbReference type="HOGENOM" id="CLU_003291_1_3_9"/>
<dbReference type="Proteomes" id="UP000000531">
    <property type="component" value="Chromosome"/>
</dbReference>
<dbReference type="GO" id="GO:0050451">
    <property type="term" value="F:CoA-disulfide reductase (NADPH) activity"/>
    <property type="evidence" value="ECO:0007669"/>
    <property type="project" value="UniProtKB-UniRule"/>
</dbReference>
<dbReference type="GO" id="GO:0050660">
    <property type="term" value="F:flavin adenine dinucleotide binding"/>
    <property type="evidence" value="ECO:0007669"/>
    <property type="project" value="UniProtKB-UniRule"/>
</dbReference>
<dbReference type="GO" id="GO:0050661">
    <property type="term" value="F:NADP binding"/>
    <property type="evidence" value="ECO:0007669"/>
    <property type="project" value="UniProtKB-UniRule"/>
</dbReference>
<dbReference type="GO" id="GO:0003756">
    <property type="term" value="F:protein disulfide isomerase activity"/>
    <property type="evidence" value="ECO:0007669"/>
    <property type="project" value="UniProtKB-UniRule"/>
</dbReference>
<dbReference type="Gene3D" id="3.30.390.30">
    <property type="match status" value="1"/>
</dbReference>
<dbReference type="Gene3D" id="3.50.50.60">
    <property type="entry name" value="FAD/NAD(P)-binding domain"/>
    <property type="match status" value="2"/>
</dbReference>
<dbReference type="HAMAP" id="MF_01608">
    <property type="entry name" value="CoA_diS_reduct"/>
    <property type="match status" value="1"/>
</dbReference>
<dbReference type="InterPro" id="IPR017758">
    <property type="entry name" value="CoA_disulphide_reductase"/>
</dbReference>
<dbReference type="InterPro" id="IPR023536">
    <property type="entry name" value="CoA_disulphide_reductase_staph"/>
</dbReference>
<dbReference type="InterPro" id="IPR050260">
    <property type="entry name" value="FAD-bd_OxRdtase"/>
</dbReference>
<dbReference type="InterPro" id="IPR036188">
    <property type="entry name" value="FAD/NAD-bd_sf"/>
</dbReference>
<dbReference type="InterPro" id="IPR023753">
    <property type="entry name" value="FAD/NAD-binding_dom"/>
</dbReference>
<dbReference type="InterPro" id="IPR016156">
    <property type="entry name" value="FAD/NAD-linked_Rdtase_dimer_sf"/>
</dbReference>
<dbReference type="InterPro" id="IPR004099">
    <property type="entry name" value="Pyr_nucl-diS_OxRdtase_dimer"/>
</dbReference>
<dbReference type="NCBIfam" id="TIGR03385">
    <property type="entry name" value="CoA_CoA_reduc"/>
    <property type="match status" value="1"/>
</dbReference>
<dbReference type="NCBIfam" id="NF010037">
    <property type="entry name" value="PRK13512.1"/>
    <property type="match status" value="1"/>
</dbReference>
<dbReference type="PANTHER" id="PTHR43429:SF1">
    <property type="entry name" value="NAD(P)H SULFUR OXIDOREDUCTASE (COA-DEPENDENT)"/>
    <property type="match status" value="1"/>
</dbReference>
<dbReference type="PANTHER" id="PTHR43429">
    <property type="entry name" value="PYRIDINE NUCLEOTIDE-DISULFIDE OXIDOREDUCTASE DOMAIN-CONTAINING"/>
    <property type="match status" value="1"/>
</dbReference>
<dbReference type="Pfam" id="PF07992">
    <property type="entry name" value="Pyr_redox_2"/>
    <property type="match status" value="1"/>
</dbReference>
<dbReference type="Pfam" id="PF02852">
    <property type="entry name" value="Pyr_redox_dim"/>
    <property type="match status" value="1"/>
</dbReference>
<dbReference type="PRINTS" id="PR00368">
    <property type="entry name" value="FADPNR"/>
</dbReference>
<dbReference type="PRINTS" id="PR00411">
    <property type="entry name" value="PNDRDTASEI"/>
</dbReference>
<dbReference type="SUPFAM" id="SSF51905">
    <property type="entry name" value="FAD/NAD(P)-binding domain"/>
    <property type="match status" value="1"/>
</dbReference>
<dbReference type="SUPFAM" id="SSF55424">
    <property type="entry name" value="FAD/NAD-linked reductases, dimerisation (C-terminal) domain"/>
    <property type="match status" value="1"/>
</dbReference>
<gene>
    <name evidence="1" type="primary">cdr</name>
    <name type="ordered locus">SERP0560</name>
</gene>
<feature type="chain" id="PRO_0000184696" description="Coenzyme A disulfide reductase">
    <location>
        <begin position="1"/>
        <end position="438"/>
    </location>
</feature>
<feature type="active site" description="Nucleophile" evidence="1">
    <location>
        <position position="43"/>
    </location>
</feature>
<feature type="active site" description="Redox-active" evidence="1">
    <location>
        <position position="43"/>
    </location>
</feature>
<feature type="binding site" evidence="1">
    <location>
        <begin position="8"/>
        <end position="33"/>
    </location>
    <ligand>
        <name>FAD</name>
        <dbReference type="ChEBI" id="CHEBI:57692"/>
    </ligand>
</feature>
<feature type="binding site" evidence="1">
    <location>
        <position position="15"/>
    </location>
    <ligand>
        <name>substrate</name>
    </ligand>
</feature>
<feature type="binding site" evidence="1">
    <location>
        <position position="19"/>
    </location>
    <ligand>
        <name>substrate</name>
    </ligand>
</feature>
<feature type="binding site" evidence="1">
    <location>
        <position position="22"/>
    </location>
    <ligand>
        <name>substrate</name>
    </ligand>
</feature>
<feature type="binding site" evidence="1">
    <location>
        <position position="39"/>
    </location>
    <ligand>
        <name>substrate</name>
    </ligand>
</feature>
<feature type="binding site" evidence="1">
    <location>
        <position position="42"/>
    </location>
    <ligand>
        <name>substrate</name>
    </ligand>
</feature>
<feature type="binding site" evidence="1">
    <location>
        <position position="71"/>
    </location>
    <ligand>
        <name>substrate</name>
    </ligand>
</feature>
<feature type="binding site" evidence="1">
    <location>
        <begin position="151"/>
        <end position="166"/>
    </location>
    <ligand>
        <name>NADP(+)</name>
        <dbReference type="ChEBI" id="CHEBI:58349"/>
    </ligand>
</feature>
<feature type="binding site" evidence="1">
    <location>
        <begin position="267"/>
        <end position="277"/>
    </location>
    <ligand>
        <name>FAD</name>
        <dbReference type="ChEBI" id="CHEBI:57692"/>
    </ligand>
</feature>
<feature type="binding site" evidence="1">
    <location>
        <position position="299"/>
    </location>
    <ligand>
        <name>substrate</name>
    </ligand>
</feature>
<feature type="binding site" evidence="1">
    <location>
        <position position="419"/>
    </location>
    <ligand>
        <name>FAD</name>
        <dbReference type="ChEBI" id="CHEBI:57692"/>
    </ligand>
</feature>
<feature type="binding site" evidence="1">
    <location>
        <position position="427"/>
    </location>
    <ligand>
        <name>substrate</name>
    </ligand>
</feature>
<protein>
    <recommendedName>
        <fullName evidence="1">Coenzyme A disulfide reductase</fullName>
        <shortName evidence="1">CoA-disulfide reductase</shortName>
        <shortName evidence="1">CoADR</shortName>
        <ecNumber evidence="1">1.8.1.14</ecNumber>
    </recommendedName>
</protein>
<evidence type="ECO:0000255" key="1">
    <source>
        <dbReference type="HAMAP-Rule" id="MF_01608"/>
    </source>
</evidence>
<accession>Q5HQI9</accession>
<name>CDR_STAEQ</name>
<proteinExistence type="inferred from homology"/>
<keyword id="KW-0274">FAD</keyword>
<keyword id="KW-0285">Flavoprotein</keyword>
<keyword id="KW-0521">NADP</keyword>
<keyword id="KW-0560">Oxidoreductase</keyword>
<keyword id="KW-0676">Redox-active center</keyword>
<keyword id="KW-1185">Reference proteome</keyword>
<organism>
    <name type="scientific">Staphylococcus epidermidis (strain ATCC 35984 / DSM 28319 / BCRC 17069 / CCUG 31568 / BM 3577 / RP62A)</name>
    <dbReference type="NCBI Taxonomy" id="176279"/>
    <lineage>
        <taxon>Bacteria</taxon>
        <taxon>Bacillati</taxon>
        <taxon>Bacillota</taxon>
        <taxon>Bacilli</taxon>
        <taxon>Bacillales</taxon>
        <taxon>Staphylococcaceae</taxon>
        <taxon>Staphylococcus</taxon>
    </lineage>
</organism>
<sequence length="438" mass="49366">MNKIIIVGAVAGGATCASQIRRLDKESEIIVFEKDRDMSFANCALPYYIGNVIEDRRKVLAYTPNQFYDKKQITVKTYHEVIQINDERQTVTVLNHQTNQTFEESYDTLILSPGASANRLNTHSDISFTVRNLEDTETIDTFITNTKAQRALVVGAGYISLEVLENLHHRGLDVTWIHRSTNINKLMDQDMNQPIIDEIEKRNITYRFNEEISHVNGHEVTFTSGKVENFDLIIEGVGTHPNSQFIKSSNVILNDKGYIPVNHNFQTNIPNIYALGDVITSHYRHVNLPAQVPLAWGAHRGASIIAEQLSGNSSIHFKGYLGNNIVKFFDYTLASVGIKPNELKNFDYDMVEVKQGAHAGYYPGNSPLHLRVYFEKDSRKLIRAAAVGKQGADKRIDVLSMAMMNNATVDDLTEFEVAYAPPYSHPKDLINLIGYKAQ</sequence>